<feature type="chain" id="PRO_1000092468" description="Elongation factor 4">
    <location>
        <begin position="1"/>
        <end position="599"/>
    </location>
</feature>
<feature type="domain" description="tr-type G">
    <location>
        <begin position="2"/>
        <end position="184"/>
    </location>
</feature>
<feature type="binding site" evidence="1">
    <location>
        <begin position="14"/>
        <end position="19"/>
    </location>
    <ligand>
        <name>GTP</name>
        <dbReference type="ChEBI" id="CHEBI:37565"/>
    </ligand>
</feature>
<feature type="binding site" evidence="1">
    <location>
        <begin position="131"/>
        <end position="134"/>
    </location>
    <ligand>
        <name>GTP</name>
        <dbReference type="ChEBI" id="CHEBI:37565"/>
    </ligand>
</feature>
<organism>
    <name type="scientific">Yersinia pestis bv. Antiqua (strain Angola)</name>
    <dbReference type="NCBI Taxonomy" id="349746"/>
    <lineage>
        <taxon>Bacteria</taxon>
        <taxon>Pseudomonadati</taxon>
        <taxon>Pseudomonadota</taxon>
        <taxon>Gammaproteobacteria</taxon>
        <taxon>Enterobacterales</taxon>
        <taxon>Yersiniaceae</taxon>
        <taxon>Yersinia</taxon>
    </lineage>
</organism>
<accession>A9R400</accession>
<sequence length="599" mass="66709">MKHIRNFSIIAHIDHGKSTLSDRIIQICGGLSEREMAAQVLDSMDLERERGITIKAQSVTLDYHSKDGQTYQLNFIDTPGHVDFSYEVSRSLAACEGALLVVDAGQGVEAQTLANCYTAMEMDLEVVPVLNKIDLPAADPERVAEEIEDIVGIDATDAIRCSAKTGVGVPDVLERLVRDIPAPEGDPNGPLQALIIDSWFDNYLGVVSLIRIKNGSLRKGDKVKVMSTGQSYNADRLGIFTPKRVDRDVLNCGEVGWLVCAIKDILGAPVGDTLTLTRNPAEKSLPGFKKVKPQVYAGLFPISSDDYESFRDALGKLSLNDASLFYEPESSTALGFGFRCGFLGLLHMEIIQERLEREYDLELITTAPTVVYEVITTNQETVYVDSPSKLPALNNIEELREPIAECHMLLPQEYLGNVITLCIEKRGTQTNMVYHGKQVALTYEIPMAEVVLDFFDRLKSTSRGYASLDYNFKRFQTSDMVRVDVLINNERVDALALITHRDNAQYRGRDLVEKMKELIPRQQFDIAIQAAIGNHIIARSTVKQLRKNVLAKCYGGDVSRKKKLLQKQKDGKKRMKQVGNVELPQEAFLAILHVGKDSK</sequence>
<evidence type="ECO:0000255" key="1">
    <source>
        <dbReference type="HAMAP-Rule" id="MF_00071"/>
    </source>
</evidence>
<protein>
    <recommendedName>
        <fullName evidence="1">Elongation factor 4</fullName>
        <shortName evidence="1">EF-4</shortName>
        <ecNumber evidence="1">3.6.5.n1</ecNumber>
    </recommendedName>
    <alternativeName>
        <fullName evidence="1">Ribosomal back-translocase LepA</fullName>
    </alternativeName>
</protein>
<reference key="1">
    <citation type="journal article" date="2010" name="J. Bacteriol.">
        <title>Genome sequence of the deep-rooted Yersinia pestis strain Angola reveals new insights into the evolution and pangenome of the plague bacterium.</title>
        <authorList>
            <person name="Eppinger M."/>
            <person name="Worsham P.L."/>
            <person name="Nikolich M.P."/>
            <person name="Riley D.R."/>
            <person name="Sebastian Y."/>
            <person name="Mou S."/>
            <person name="Achtman M."/>
            <person name="Lindler L.E."/>
            <person name="Ravel J."/>
        </authorList>
    </citation>
    <scope>NUCLEOTIDE SEQUENCE [LARGE SCALE GENOMIC DNA]</scope>
    <source>
        <strain>Angola</strain>
    </source>
</reference>
<dbReference type="EC" id="3.6.5.n1" evidence="1"/>
<dbReference type="EMBL" id="CP000901">
    <property type="protein sequence ID" value="ABX87475.1"/>
    <property type="molecule type" value="Genomic_DNA"/>
</dbReference>
<dbReference type="RefSeq" id="WP_002209677.1">
    <property type="nucleotide sequence ID" value="NZ_CP009935.1"/>
</dbReference>
<dbReference type="SMR" id="A9R400"/>
<dbReference type="GeneID" id="57975975"/>
<dbReference type="KEGG" id="ypg:YpAngola_A3609"/>
<dbReference type="PATRIC" id="fig|349746.12.peg.309"/>
<dbReference type="GO" id="GO:0005886">
    <property type="term" value="C:plasma membrane"/>
    <property type="evidence" value="ECO:0007669"/>
    <property type="project" value="UniProtKB-SubCell"/>
</dbReference>
<dbReference type="GO" id="GO:0005525">
    <property type="term" value="F:GTP binding"/>
    <property type="evidence" value="ECO:0007669"/>
    <property type="project" value="UniProtKB-UniRule"/>
</dbReference>
<dbReference type="GO" id="GO:0003924">
    <property type="term" value="F:GTPase activity"/>
    <property type="evidence" value="ECO:0007669"/>
    <property type="project" value="UniProtKB-UniRule"/>
</dbReference>
<dbReference type="GO" id="GO:0097216">
    <property type="term" value="F:guanosine tetraphosphate binding"/>
    <property type="evidence" value="ECO:0007669"/>
    <property type="project" value="UniProtKB-ARBA"/>
</dbReference>
<dbReference type="GO" id="GO:0043022">
    <property type="term" value="F:ribosome binding"/>
    <property type="evidence" value="ECO:0007669"/>
    <property type="project" value="UniProtKB-UniRule"/>
</dbReference>
<dbReference type="GO" id="GO:0003746">
    <property type="term" value="F:translation elongation factor activity"/>
    <property type="evidence" value="ECO:0007669"/>
    <property type="project" value="UniProtKB-UniRule"/>
</dbReference>
<dbReference type="GO" id="GO:0045727">
    <property type="term" value="P:positive regulation of translation"/>
    <property type="evidence" value="ECO:0007669"/>
    <property type="project" value="UniProtKB-UniRule"/>
</dbReference>
<dbReference type="CDD" id="cd03699">
    <property type="entry name" value="EF4_II"/>
    <property type="match status" value="1"/>
</dbReference>
<dbReference type="CDD" id="cd16260">
    <property type="entry name" value="EF4_III"/>
    <property type="match status" value="1"/>
</dbReference>
<dbReference type="CDD" id="cd01890">
    <property type="entry name" value="LepA"/>
    <property type="match status" value="1"/>
</dbReference>
<dbReference type="CDD" id="cd03709">
    <property type="entry name" value="lepA_C"/>
    <property type="match status" value="1"/>
</dbReference>
<dbReference type="FunFam" id="3.30.70.240:FF:000005">
    <property type="entry name" value="Elongation factor 4"/>
    <property type="match status" value="1"/>
</dbReference>
<dbReference type="FunFam" id="3.40.50.300:FF:000078">
    <property type="entry name" value="Elongation factor 4"/>
    <property type="match status" value="1"/>
</dbReference>
<dbReference type="FunFam" id="2.40.30.10:FF:000015">
    <property type="entry name" value="Translation factor GUF1, mitochondrial"/>
    <property type="match status" value="1"/>
</dbReference>
<dbReference type="FunFam" id="3.30.70.2570:FF:000001">
    <property type="entry name" value="Translation factor GUF1, mitochondrial"/>
    <property type="match status" value="1"/>
</dbReference>
<dbReference type="FunFam" id="3.30.70.870:FF:000004">
    <property type="entry name" value="Translation factor GUF1, mitochondrial"/>
    <property type="match status" value="1"/>
</dbReference>
<dbReference type="Gene3D" id="3.30.70.240">
    <property type="match status" value="1"/>
</dbReference>
<dbReference type="Gene3D" id="3.30.70.2570">
    <property type="entry name" value="Elongation factor 4, C-terminal domain"/>
    <property type="match status" value="1"/>
</dbReference>
<dbReference type="Gene3D" id="3.30.70.870">
    <property type="entry name" value="Elongation Factor G (Translational Gtpase), domain 3"/>
    <property type="match status" value="1"/>
</dbReference>
<dbReference type="Gene3D" id="3.40.50.300">
    <property type="entry name" value="P-loop containing nucleotide triphosphate hydrolases"/>
    <property type="match status" value="1"/>
</dbReference>
<dbReference type="Gene3D" id="2.40.30.10">
    <property type="entry name" value="Translation factors"/>
    <property type="match status" value="1"/>
</dbReference>
<dbReference type="HAMAP" id="MF_00071">
    <property type="entry name" value="LepA"/>
    <property type="match status" value="1"/>
</dbReference>
<dbReference type="InterPro" id="IPR006297">
    <property type="entry name" value="EF-4"/>
</dbReference>
<dbReference type="InterPro" id="IPR035647">
    <property type="entry name" value="EFG_III/V"/>
</dbReference>
<dbReference type="InterPro" id="IPR000640">
    <property type="entry name" value="EFG_V-like"/>
</dbReference>
<dbReference type="InterPro" id="IPR004161">
    <property type="entry name" value="EFTu-like_2"/>
</dbReference>
<dbReference type="InterPro" id="IPR031157">
    <property type="entry name" value="G_TR_CS"/>
</dbReference>
<dbReference type="InterPro" id="IPR038363">
    <property type="entry name" value="LepA_C_sf"/>
</dbReference>
<dbReference type="InterPro" id="IPR013842">
    <property type="entry name" value="LepA_CTD"/>
</dbReference>
<dbReference type="InterPro" id="IPR035654">
    <property type="entry name" value="LepA_IV"/>
</dbReference>
<dbReference type="InterPro" id="IPR027417">
    <property type="entry name" value="P-loop_NTPase"/>
</dbReference>
<dbReference type="InterPro" id="IPR005225">
    <property type="entry name" value="Small_GTP-bd"/>
</dbReference>
<dbReference type="InterPro" id="IPR000795">
    <property type="entry name" value="T_Tr_GTP-bd_dom"/>
</dbReference>
<dbReference type="NCBIfam" id="TIGR01393">
    <property type="entry name" value="lepA"/>
    <property type="match status" value="1"/>
</dbReference>
<dbReference type="NCBIfam" id="TIGR00231">
    <property type="entry name" value="small_GTP"/>
    <property type="match status" value="1"/>
</dbReference>
<dbReference type="PANTHER" id="PTHR43512:SF4">
    <property type="entry name" value="TRANSLATION FACTOR GUF1 HOMOLOG, CHLOROPLASTIC"/>
    <property type="match status" value="1"/>
</dbReference>
<dbReference type="PANTHER" id="PTHR43512">
    <property type="entry name" value="TRANSLATION FACTOR GUF1-RELATED"/>
    <property type="match status" value="1"/>
</dbReference>
<dbReference type="Pfam" id="PF00679">
    <property type="entry name" value="EFG_C"/>
    <property type="match status" value="1"/>
</dbReference>
<dbReference type="Pfam" id="PF00009">
    <property type="entry name" value="GTP_EFTU"/>
    <property type="match status" value="1"/>
</dbReference>
<dbReference type="Pfam" id="PF03144">
    <property type="entry name" value="GTP_EFTU_D2"/>
    <property type="match status" value="1"/>
</dbReference>
<dbReference type="Pfam" id="PF06421">
    <property type="entry name" value="LepA_C"/>
    <property type="match status" value="1"/>
</dbReference>
<dbReference type="PRINTS" id="PR00315">
    <property type="entry name" value="ELONGATNFCT"/>
</dbReference>
<dbReference type="SUPFAM" id="SSF54980">
    <property type="entry name" value="EF-G C-terminal domain-like"/>
    <property type="match status" value="2"/>
</dbReference>
<dbReference type="SUPFAM" id="SSF52540">
    <property type="entry name" value="P-loop containing nucleoside triphosphate hydrolases"/>
    <property type="match status" value="1"/>
</dbReference>
<dbReference type="PROSITE" id="PS00301">
    <property type="entry name" value="G_TR_1"/>
    <property type="match status" value="1"/>
</dbReference>
<dbReference type="PROSITE" id="PS51722">
    <property type="entry name" value="G_TR_2"/>
    <property type="match status" value="1"/>
</dbReference>
<keyword id="KW-0997">Cell inner membrane</keyword>
<keyword id="KW-1003">Cell membrane</keyword>
<keyword id="KW-0342">GTP-binding</keyword>
<keyword id="KW-0378">Hydrolase</keyword>
<keyword id="KW-0472">Membrane</keyword>
<keyword id="KW-0547">Nucleotide-binding</keyword>
<keyword id="KW-0648">Protein biosynthesis</keyword>
<proteinExistence type="inferred from homology"/>
<gene>
    <name evidence="1" type="primary">lepA</name>
    <name type="ordered locus">YpAngola_A3609</name>
</gene>
<name>LEPA_YERPG</name>
<comment type="function">
    <text evidence="1">Required for accurate and efficient protein synthesis under certain stress conditions. May act as a fidelity factor of the translation reaction, by catalyzing a one-codon backward translocation of tRNAs on improperly translocated ribosomes. Back-translocation proceeds from a post-translocation (POST) complex to a pre-translocation (PRE) complex, thus giving elongation factor G a second chance to translocate the tRNAs correctly. Binds to ribosomes in a GTP-dependent manner.</text>
</comment>
<comment type="catalytic activity">
    <reaction evidence="1">
        <text>GTP + H2O = GDP + phosphate + H(+)</text>
        <dbReference type="Rhea" id="RHEA:19669"/>
        <dbReference type="ChEBI" id="CHEBI:15377"/>
        <dbReference type="ChEBI" id="CHEBI:15378"/>
        <dbReference type="ChEBI" id="CHEBI:37565"/>
        <dbReference type="ChEBI" id="CHEBI:43474"/>
        <dbReference type="ChEBI" id="CHEBI:58189"/>
        <dbReference type="EC" id="3.6.5.n1"/>
    </reaction>
</comment>
<comment type="subcellular location">
    <subcellularLocation>
        <location evidence="1">Cell inner membrane</location>
        <topology evidence="1">Peripheral membrane protein</topology>
        <orientation evidence="1">Cytoplasmic side</orientation>
    </subcellularLocation>
</comment>
<comment type="similarity">
    <text evidence="1">Belongs to the TRAFAC class translation factor GTPase superfamily. Classic translation factor GTPase family. LepA subfamily.</text>
</comment>